<evidence type="ECO:0000305" key="1"/>
<organism>
    <name type="scientific">Dictyostelium discoideum</name>
    <name type="common">Social amoeba</name>
    <dbReference type="NCBI Taxonomy" id="44689"/>
    <lineage>
        <taxon>Eukaryota</taxon>
        <taxon>Amoebozoa</taxon>
        <taxon>Evosea</taxon>
        <taxon>Eumycetozoa</taxon>
        <taxon>Dictyostelia</taxon>
        <taxon>Dictyosteliales</taxon>
        <taxon>Dictyosteliaceae</taxon>
        <taxon>Dictyostelium</taxon>
    </lineage>
</organism>
<proteinExistence type="uncertain"/>
<reference key="1">
    <citation type="journal article" date="2005" name="Nature">
        <title>The genome of the social amoeba Dictyostelium discoideum.</title>
        <authorList>
            <person name="Eichinger L."/>
            <person name="Pachebat J.A."/>
            <person name="Gloeckner G."/>
            <person name="Rajandream M.A."/>
            <person name="Sucgang R."/>
            <person name="Berriman M."/>
            <person name="Song J."/>
            <person name="Olsen R."/>
            <person name="Szafranski K."/>
            <person name="Xu Q."/>
            <person name="Tunggal B."/>
            <person name="Kummerfeld S."/>
            <person name="Madera M."/>
            <person name="Konfortov B.A."/>
            <person name="Rivero F."/>
            <person name="Bankier A.T."/>
            <person name="Lehmann R."/>
            <person name="Hamlin N."/>
            <person name="Davies R."/>
            <person name="Gaudet P."/>
            <person name="Fey P."/>
            <person name="Pilcher K."/>
            <person name="Chen G."/>
            <person name="Saunders D."/>
            <person name="Sodergren E.J."/>
            <person name="Davis P."/>
            <person name="Kerhornou A."/>
            <person name="Nie X."/>
            <person name="Hall N."/>
            <person name="Anjard C."/>
            <person name="Hemphill L."/>
            <person name="Bason N."/>
            <person name="Farbrother P."/>
            <person name="Desany B."/>
            <person name="Just E."/>
            <person name="Morio T."/>
            <person name="Rost R."/>
            <person name="Churcher C.M."/>
            <person name="Cooper J."/>
            <person name="Haydock S."/>
            <person name="van Driessche N."/>
            <person name="Cronin A."/>
            <person name="Goodhead I."/>
            <person name="Muzny D.M."/>
            <person name="Mourier T."/>
            <person name="Pain A."/>
            <person name="Lu M."/>
            <person name="Harper D."/>
            <person name="Lindsay R."/>
            <person name="Hauser H."/>
            <person name="James K.D."/>
            <person name="Quiles M."/>
            <person name="Madan Babu M."/>
            <person name="Saito T."/>
            <person name="Buchrieser C."/>
            <person name="Wardroper A."/>
            <person name="Felder M."/>
            <person name="Thangavelu M."/>
            <person name="Johnson D."/>
            <person name="Knights A."/>
            <person name="Loulseged H."/>
            <person name="Mungall K.L."/>
            <person name="Oliver K."/>
            <person name="Price C."/>
            <person name="Quail M.A."/>
            <person name="Urushihara H."/>
            <person name="Hernandez J."/>
            <person name="Rabbinowitsch E."/>
            <person name="Steffen D."/>
            <person name="Sanders M."/>
            <person name="Ma J."/>
            <person name="Kohara Y."/>
            <person name="Sharp S."/>
            <person name="Simmonds M.N."/>
            <person name="Spiegler S."/>
            <person name="Tivey A."/>
            <person name="Sugano S."/>
            <person name="White B."/>
            <person name="Walker D."/>
            <person name="Woodward J.R."/>
            <person name="Winckler T."/>
            <person name="Tanaka Y."/>
            <person name="Shaulsky G."/>
            <person name="Schleicher M."/>
            <person name="Weinstock G.M."/>
            <person name="Rosenthal A."/>
            <person name="Cox E.C."/>
            <person name="Chisholm R.L."/>
            <person name="Gibbs R.A."/>
            <person name="Loomis W.F."/>
            <person name="Platzer M."/>
            <person name="Kay R.R."/>
            <person name="Williams J.G."/>
            <person name="Dear P.H."/>
            <person name="Noegel A.A."/>
            <person name="Barrell B.G."/>
            <person name="Kuspa A."/>
        </authorList>
    </citation>
    <scope>NUCLEOTIDE SEQUENCE [LARGE SCALE GENOMIC DNA]</scope>
    <source>
        <strain>AX4</strain>
    </source>
</reference>
<comment type="caution">
    <text evidence="1">Could be the product of a pseudogene.</text>
</comment>
<comment type="sequence caution" evidence="1">
    <conflict type="erroneous gene model prediction">
        <sequence resource="EMBL-CDS" id="EAL63865"/>
    </conflict>
</comment>
<sequence>MNPSIKYTIEINKYPISQSLNTNQFVMSASFISSETNDDICCLSKEFGNTTSSGGGGGGGGCGGGGCGGGGGGGGGGGGGGGVNNHSVYGRFIKRAIIDSKVQSIENILLDSTMKPISNLHIQLKVLLVSQFHNIQIVLLLIQTFQSLLIKVILKFVQIIHLLLKVNDRWYRHW</sequence>
<name>Y5768_DICDI</name>
<gene>
    <name type="ORF">DDB_G0287183</name>
</gene>
<keyword id="KW-1185">Reference proteome</keyword>
<dbReference type="EMBL" id="AAFI02000098">
    <property type="protein sequence ID" value="EAL63865.1"/>
    <property type="status" value="ALT_SEQ"/>
    <property type="molecule type" value="Genomic_DNA"/>
</dbReference>
<dbReference type="EMBL" id="AAFI02000098">
    <property type="protein sequence ID" value="EAL63866.1"/>
    <property type="molecule type" value="Genomic_DNA"/>
</dbReference>
<dbReference type="RefSeq" id="XP_637381.1">
    <property type="nucleotide sequence ID" value="XM_632289.1"/>
</dbReference>
<dbReference type="RefSeq" id="XP_637382.1">
    <property type="nucleotide sequence ID" value="XM_632290.1"/>
</dbReference>
<dbReference type="PaxDb" id="44689-DDB0215770"/>
<dbReference type="EnsemblProtists" id="EAL63865">
    <property type="protein sequence ID" value="EAL63865"/>
    <property type="gene ID" value="DDB_G0287181"/>
</dbReference>
<dbReference type="EnsemblProtists" id="EAL63866">
    <property type="protein sequence ID" value="EAL63866"/>
    <property type="gene ID" value="DDB_G0287183"/>
</dbReference>
<dbReference type="GeneID" id="8626006"/>
<dbReference type="KEGG" id="ddi:DDB_G0287181"/>
<dbReference type="KEGG" id="ddi:DDB_G0287183"/>
<dbReference type="VEuPathDB" id="AmoebaDB:DDB_G0287183"/>
<dbReference type="HOGENOM" id="CLU_1542887_0_0_1"/>
<dbReference type="InParanoid" id="Q54KP9"/>
<dbReference type="Proteomes" id="UP000002195">
    <property type="component" value="Chromosome 4"/>
</dbReference>
<dbReference type="PANTHER" id="PTHR31378:SF29">
    <property type="entry name" value="EGF-LIKE DOMAIN-CONTAINING PROTEIN-RELATED"/>
    <property type="match status" value="1"/>
</dbReference>
<dbReference type="PANTHER" id="PTHR31378">
    <property type="entry name" value="EGF-LIKE DOMAIN-CONTAINING PROTEIN-RELATED-RELATED"/>
    <property type="match status" value="1"/>
</dbReference>
<accession>Q54KP9</accession>
<accession>Q54KP8</accession>
<protein>
    <recommendedName>
        <fullName>Putative uncharacterized protein DDB_G0287183</fullName>
    </recommendedName>
</protein>
<feature type="chain" id="PRO_0000347037" description="Putative uncharacterized protein DDB_G0287183">
    <location>
        <begin position="1"/>
        <end position="174"/>
    </location>
</feature>